<organism>
    <name type="scientific">Ehrlichia canis (strain Jake)</name>
    <dbReference type="NCBI Taxonomy" id="269484"/>
    <lineage>
        <taxon>Bacteria</taxon>
        <taxon>Pseudomonadati</taxon>
        <taxon>Pseudomonadota</taxon>
        <taxon>Alphaproteobacteria</taxon>
        <taxon>Rickettsiales</taxon>
        <taxon>Anaplasmataceae</taxon>
        <taxon>Ehrlichia</taxon>
    </lineage>
</organism>
<protein>
    <recommendedName>
        <fullName evidence="1">Ribonuclease HII</fullName>
        <shortName evidence="1">RNase HII</shortName>
        <ecNumber evidence="1">3.1.26.4</ecNumber>
    </recommendedName>
</protein>
<proteinExistence type="inferred from homology"/>
<gene>
    <name evidence="1" type="primary">rnhB</name>
    <name type="ordered locus">Ecaj_0173</name>
</gene>
<dbReference type="EC" id="3.1.26.4" evidence="1"/>
<dbReference type="EMBL" id="CP000107">
    <property type="protein sequence ID" value="AAZ68224.1"/>
    <property type="molecule type" value="Genomic_DNA"/>
</dbReference>
<dbReference type="RefSeq" id="WP_011304302.1">
    <property type="nucleotide sequence ID" value="NC_007354.1"/>
</dbReference>
<dbReference type="SMR" id="Q3YST1"/>
<dbReference type="FunCoup" id="Q3YST1">
    <property type="interactions" value="205"/>
</dbReference>
<dbReference type="STRING" id="269484.Ecaj_0173"/>
<dbReference type="KEGG" id="ecn:Ecaj_0173"/>
<dbReference type="eggNOG" id="COG0164">
    <property type="taxonomic scope" value="Bacteria"/>
</dbReference>
<dbReference type="HOGENOM" id="CLU_036532_3_2_5"/>
<dbReference type="InParanoid" id="Q3YST1"/>
<dbReference type="Proteomes" id="UP000000435">
    <property type="component" value="Chromosome"/>
</dbReference>
<dbReference type="GO" id="GO:0005737">
    <property type="term" value="C:cytoplasm"/>
    <property type="evidence" value="ECO:0007669"/>
    <property type="project" value="UniProtKB-SubCell"/>
</dbReference>
<dbReference type="GO" id="GO:0032299">
    <property type="term" value="C:ribonuclease H2 complex"/>
    <property type="evidence" value="ECO:0007669"/>
    <property type="project" value="TreeGrafter"/>
</dbReference>
<dbReference type="GO" id="GO:0030145">
    <property type="term" value="F:manganese ion binding"/>
    <property type="evidence" value="ECO:0007669"/>
    <property type="project" value="UniProtKB-UniRule"/>
</dbReference>
<dbReference type="GO" id="GO:0003723">
    <property type="term" value="F:RNA binding"/>
    <property type="evidence" value="ECO:0007669"/>
    <property type="project" value="InterPro"/>
</dbReference>
<dbReference type="GO" id="GO:0004523">
    <property type="term" value="F:RNA-DNA hybrid ribonuclease activity"/>
    <property type="evidence" value="ECO:0007669"/>
    <property type="project" value="UniProtKB-UniRule"/>
</dbReference>
<dbReference type="GO" id="GO:0043137">
    <property type="term" value="P:DNA replication, removal of RNA primer"/>
    <property type="evidence" value="ECO:0007669"/>
    <property type="project" value="TreeGrafter"/>
</dbReference>
<dbReference type="GO" id="GO:0006298">
    <property type="term" value="P:mismatch repair"/>
    <property type="evidence" value="ECO:0007669"/>
    <property type="project" value="TreeGrafter"/>
</dbReference>
<dbReference type="CDD" id="cd07182">
    <property type="entry name" value="RNase_HII_bacteria_HII_like"/>
    <property type="match status" value="1"/>
</dbReference>
<dbReference type="Gene3D" id="3.30.420.10">
    <property type="entry name" value="Ribonuclease H-like superfamily/Ribonuclease H"/>
    <property type="match status" value="1"/>
</dbReference>
<dbReference type="HAMAP" id="MF_00052_B">
    <property type="entry name" value="RNase_HII_B"/>
    <property type="match status" value="1"/>
</dbReference>
<dbReference type="InterPro" id="IPR022898">
    <property type="entry name" value="RNase_HII"/>
</dbReference>
<dbReference type="InterPro" id="IPR001352">
    <property type="entry name" value="RNase_HII/HIII"/>
</dbReference>
<dbReference type="InterPro" id="IPR024567">
    <property type="entry name" value="RNase_HII/HIII_dom"/>
</dbReference>
<dbReference type="InterPro" id="IPR012337">
    <property type="entry name" value="RNaseH-like_sf"/>
</dbReference>
<dbReference type="InterPro" id="IPR036397">
    <property type="entry name" value="RNaseH_sf"/>
</dbReference>
<dbReference type="NCBIfam" id="NF000595">
    <property type="entry name" value="PRK00015.1-3"/>
    <property type="match status" value="1"/>
</dbReference>
<dbReference type="PANTHER" id="PTHR10954">
    <property type="entry name" value="RIBONUCLEASE H2 SUBUNIT A"/>
    <property type="match status" value="1"/>
</dbReference>
<dbReference type="PANTHER" id="PTHR10954:SF18">
    <property type="entry name" value="RIBONUCLEASE HII"/>
    <property type="match status" value="1"/>
</dbReference>
<dbReference type="Pfam" id="PF01351">
    <property type="entry name" value="RNase_HII"/>
    <property type="match status" value="1"/>
</dbReference>
<dbReference type="SUPFAM" id="SSF53098">
    <property type="entry name" value="Ribonuclease H-like"/>
    <property type="match status" value="1"/>
</dbReference>
<dbReference type="PROSITE" id="PS51975">
    <property type="entry name" value="RNASE_H_2"/>
    <property type="match status" value="1"/>
</dbReference>
<keyword id="KW-0963">Cytoplasm</keyword>
<keyword id="KW-0255">Endonuclease</keyword>
<keyword id="KW-0378">Hydrolase</keyword>
<keyword id="KW-0464">Manganese</keyword>
<keyword id="KW-0479">Metal-binding</keyword>
<keyword id="KW-0540">Nuclease</keyword>
<feature type="chain" id="PRO_0000235721" description="Ribonuclease HII">
    <location>
        <begin position="1"/>
        <end position="209"/>
    </location>
</feature>
<feature type="domain" description="RNase H type-2" evidence="2">
    <location>
        <begin position="19"/>
        <end position="209"/>
    </location>
</feature>
<feature type="binding site" evidence="1">
    <location>
        <position position="25"/>
    </location>
    <ligand>
        <name>a divalent metal cation</name>
        <dbReference type="ChEBI" id="CHEBI:60240"/>
    </ligand>
</feature>
<feature type="binding site" evidence="1">
    <location>
        <position position="26"/>
    </location>
    <ligand>
        <name>a divalent metal cation</name>
        <dbReference type="ChEBI" id="CHEBI:60240"/>
    </ligand>
</feature>
<feature type="binding site" evidence="1">
    <location>
        <position position="118"/>
    </location>
    <ligand>
        <name>a divalent metal cation</name>
        <dbReference type="ChEBI" id="CHEBI:60240"/>
    </ligand>
</feature>
<comment type="function">
    <text evidence="1">Endonuclease that specifically degrades the RNA of RNA-DNA hybrids.</text>
</comment>
<comment type="catalytic activity">
    <reaction evidence="1">
        <text>Endonucleolytic cleavage to 5'-phosphomonoester.</text>
        <dbReference type="EC" id="3.1.26.4"/>
    </reaction>
</comment>
<comment type="cofactor">
    <cofactor evidence="1">
        <name>Mn(2+)</name>
        <dbReference type="ChEBI" id="CHEBI:29035"/>
    </cofactor>
    <cofactor evidence="1">
        <name>Mg(2+)</name>
        <dbReference type="ChEBI" id="CHEBI:18420"/>
    </cofactor>
    <text evidence="1">Manganese or magnesium. Binds 1 divalent metal ion per monomer in the absence of substrate. May bind a second metal ion after substrate binding.</text>
</comment>
<comment type="subcellular location">
    <subcellularLocation>
        <location evidence="1">Cytoplasm</location>
    </subcellularLocation>
</comment>
<comment type="similarity">
    <text evidence="1">Belongs to the RNase HII family.</text>
</comment>
<evidence type="ECO:0000255" key="1">
    <source>
        <dbReference type="HAMAP-Rule" id="MF_00052"/>
    </source>
</evidence>
<evidence type="ECO:0000255" key="2">
    <source>
        <dbReference type="PROSITE-ProRule" id="PRU01319"/>
    </source>
</evidence>
<reference key="1">
    <citation type="journal article" date="2006" name="J. Bacteriol.">
        <title>The genome of the obligately intracellular bacterium Ehrlichia canis reveals themes of complex membrane structure and immune evasion strategies.</title>
        <authorList>
            <person name="Mavromatis K."/>
            <person name="Doyle C.K."/>
            <person name="Lykidis A."/>
            <person name="Ivanova N."/>
            <person name="Francino M.P."/>
            <person name="Chain P."/>
            <person name="Shin M."/>
            <person name="Malfatti S."/>
            <person name="Larimer F."/>
            <person name="Copeland A."/>
            <person name="Detter J.C."/>
            <person name="Land M."/>
            <person name="Richardson P.M."/>
            <person name="Yu X.J."/>
            <person name="Walker D.H."/>
            <person name="McBride J.W."/>
            <person name="Kyrpides N.C."/>
        </authorList>
    </citation>
    <scope>NUCLEOTIDE SEQUENCE [LARGE SCALE GENOMIC DNA]</scope>
    <source>
        <strain>Jake</strain>
    </source>
</reference>
<sequence>MPDFSIENEISKSINKKNCIIVGVDEVGYGSLAGPVVSAASFFLRHDNEIIYNIKDSKKLTPKKRIEVYNTITSIVKWSIGFADVYEIDQHNILNATHLAMQRALNGLNCDIDYVIVDGNKVPDLPWNRKAIVDGDNISVSIAAASIIAKVTRDKLMETLHTQYPEYQWNKNKGYGTKHHLESLYKYGKTIHHRNTFAPLPGITKLYSK</sequence>
<name>RNH2_EHRCJ</name>
<accession>Q3YST1</accession>